<gene>
    <name type="primary">RRP36</name>
    <name type="ORF">MCYG_05399</name>
</gene>
<dbReference type="EMBL" id="DS995705">
    <property type="protein sequence ID" value="EEQ32580.1"/>
    <property type="molecule type" value="Genomic_DNA"/>
</dbReference>
<dbReference type="RefSeq" id="XP_002845530.1">
    <property type="nucleotide sequence ID" value="XM_002845484.1"/>
</dbReference>
<dbReference type="SMR" id="C5FRS7"/>
<dbReference type="STRING" id="554155.C5FRS7"/>
<dbReference type="GeneID" id="9228740"/>
<dbReference type="VEuPathDB" id="FungiDB:MCYG_05399"/>
<dbReference type="eggNOG" id="KOG3190">
    <property type="taxonomic scope" value="Eukaryota"/>
</dbReference>
<dbReference type="HOGENOM" id="CLU_048802_0_0_1"/>
<dbReference type="OMA" id="ERKEMPW"/>
<dbReference type="OrthoDB" id="448446at2759"/>
<dbReference type="Proteomes" id="UP000002035">
    <property type="component" value="Unassembled WGS sequence"/>
</dbReference>
<dbReference type="GO" id="GO:0030686">
    <property type="term" value="C:90S preribosome"/>
    <property type="evidence" value="ECO:0007669"/>
    <property type="project" value="TreeGrafter"/>
</dbReference>
<dbReference type="GO" id="GO:0005730">
    <property type="term" value="C:nucleolus"/>
    <property type="evidence" value="ECO:0007669"/>
    <property type="project" value="UniProtKB-SubCell"/>
</dbReference>
<dbReference type="GO" id="GO:0000462">
    <property type="term" value="P:maturation of SSU-rRNA from tricistronic rRNA transcript (SSU-rRNA, 5.8S rRNA, LSU-rRNA)"/>
    <property type="evidence" value="ECO:0007669"/>
    <property type="project" value="TreeGrafter"/>
</dbReference>
<dbReference type="InterPro" id="IPR009292">
    <property type="entry name" value="RRP36"/>
</dbReference>
<dbReference type="PANTHER" id="PTHR21738">
    <property type="entry name" value="RIBOSOMAL RNA PROCESSING PROTEIN 36 HOMOLOG"/>
    <property type="match status" value="1"/>
</dbReference>
<dbReference type="PANTHER" id="PTHR21738:SF0">
    <property type="entry name" value="RIBOSOMAL RNA PROCESSING PROTEIN 36 HOMOLOG"/>
    <property type="match status" value="1"/>
</dbReference>
<dbReference type="Pfam" id="PF06102">
    <property type="entry name" value="RRP36"/>
    <property type="match status" value="1"/>
</dbReference>
<comment type="function">
    <text evidence="1">Component of the 90S pre-ribosome involved in the maturation of rRNAs. Required for early cleavages of the pre-RNAs in the 40S ribosomal subunit maturation pathway (By similarity).</text>
</comment>
<comment type="subunit">
    <text evidence="1">Associates with 90S and pre-40S pre-ribosomal particles.</text>
</comment>
<comment type="subcellular location">
    <subcellularLocation>
        <location evidence="1">Nucleus</location>
        <location evidence="1">Nucleolus</location>
    </subcellularLocation>
</comment>
<comment type="similarity">
    <text evidence="4">Belongs to the RRP36 family.</text>
</comment>
<keyword id="KW-0175">Coiled coil</keyword>
<keyword id="KW-0539">Nucleus</keyword>
<keyword id="KW-1185">Reference proteome</keyword>
<keyword id="KW-0687">Ribonucleoprotein</keyword>
<keyword id="KW-0690">Ribosome biogenesis</keyword>
<keyword id="KW-0698">rRNA processing</keyword>
<accession>C5FRS7</accession>
<reference key="1">
    <citation type="journal article" date="2012" name="MBio">
        <title>Comparative genome analysis of Trichophyton rubrum and related dermatophytes reveals candidate genes involved in infection.</title>
        <authorList>
            <person name="Martinez D.A."/>
            <person name="Oliver B.G."/>
            <person name="Graeser Y."/>
            <person name="Goldberg J.M."/>
            <person name="Li W."/>
            <person name="Martinez-Rossi N.M."/>
            <person name="Monod M."/>
            <person name="Shelest E."/>
            <person name="Barton R.C."/>
            <person name="Birch E."/>
            <person name="Brakhage A.A."/>
            <person name="Chen Z."/>
            <person name="Gurr S.J."/>
            <person name="Heiman D."/>
            <person name="Heitman J."/>
            <person name="Kosti I."/>
            <person name="Rossi A."/>
            <person name="Saif S."/>
            <person name="Samalova M."/>
            <person name="Saunders C.W."/>
            <person name="Shea T."/>
            <person name="Summerbell R.C."/>
            <person name="Xu J."/>
            <person name="Young S."/>
            <person name="Zeng Q."/>
            <person name="Birren B.W."/>
            <person name="Cuomo C.A."/>
            <person name="White T.C."/>
        </authorList>
    </citation>
    <scope>NUCLEOTIDE SEQUENCE [LARGE SCALE GENOMIC DNA]</scope>
    <source>
        <strain>ATCC MYA-4605 / CBS 113480</strain>
    </source>
</reference>
<protein>
    <recommendedName>
        <fullName>rRNA biogenesis protein RRP36</fullName>
    </recommendedName>
    <alternativeName>
        <fullName>Ribosomal RNA-processing protein 36</fullName>
    </alternativeName>
</protein>
<evidence type="ECO:0000250" key="1"/>
<evidence type="ECO:0000255" key="2"/>
<evidence type="ECO:0000256" key="3">
    <source>
        <dbReference type="SAM" id="MobiDB-lite"/>
    </source>
</evidence>
<evidence type="ECO:0000305" key="4"/>
<sequence>MSLLGKRIRAPREDDDLLDEGLSSSEELNSASGGDEDGELEDAETVRVPFLIYDDKELLEIADLPPIGQSDLEDSPSEKEGENDIESSLSQISFGALAKVQRSLGPLKKGSKRKHRGQEEEEEEEEQDNGNTKYKKSKLDALNELRERIRRAKEGKASKSGQSKDEEAAVKKQKESRLSKHAPAIQSSKFAVSRRRVVVDGENVAQVKSRDPRFDSAVQSYSHSHRLGSHSDPAAAKNYAFLNDYRDAELKELEEKLRRAKNEDEKQQLKKTITSMNDRKRALEHRDRERQILSKHRKRERELIKEGKKEKAWFLKKADLKKEALKEKYESMGAKQRQKGIERRRKKVASKEKKEMPRSRRMVEG</sequence>
<name>RRP36_ARTOC</name>
<organism>
    <name type="scientific">Arthroderma otae (strain ATCC MYA-4605 / CBS 113480)</name>
    <name type="common">Microsporum canis</name>
    <dbReference type="NCBI Taxonomy" id="554155"/>
    <lineage>
        <taxon>Eukaryota</taxon>
        <taxon>Fungi</taxon>
        <taxon>Dikarya</taxon>
        <taxon>Ascomycota</taxon>
        <taxon>Pezizomycotina</taxon>
        <taxon>Eurotiomycetes</taxon>
        <taxon>Eurotiomycetidae</taxon>
        <taxon>Onygenales</taxon>
        <taxon>Arthrodermataceae</taxon>
        <taxon>Microsporum</taxon>
    </lineage>
</organism>
<feature type="chain" id="PRO_0000397640" description="rRNA biogenesis protein RRP36">
    <location>
        <begin position="1"/>
        <end position="365"/>
    </location>
</feature>
<feature type="region of interest" description="Disordered" evidence="3">
    <location>
        <begin position="1"/>
        <end position="43"/>
    </location>
</feature>
<feature type="region of interest" description="Disordered" evidence="3">
    <location>
        <begin position="62"/>
        <end position="90"/>
    </location>
</feature>
<feature type="region of interest" description="Disordered" evidence="3">
    <location>
        <begin position="103"/>
        <end position="191"/>
    </location>
</feature>
<feature type="region of interest" description="Disordered" evidence="3">
    <location>
        <begin position="258"/>
        <end position="299"/>
    </location>
</feature>
<feature type="region of interest" description="Disordered" evidence="3">
    <location>
        <begin position="329"/>
        <end position="365"/>
    </location>
</feature>
<feature type="coiled-coil region" evidence="2">
    <location>
        <begin position="134"/>
        <end position="162"/>
    </location>
</feature>
<feature type="coiled-coil region" evidence="2">
    <location>
        <begin position="242"/>
        <end position="286"/>
    </location>
</feature>
<feature type="compositionally biased region" description="Low complexity" evidence="3">
    <location>
        <begin position="20"/>
        <end position="30"/>
    </location>
</feature>
<feature type="compositionally biased region" description="Acidic residues" evidence="3">
    <location>
        <begin position="34"/>
        <end position="43"/>
    </location>
</feature>
<feature type="compositionally biased region" description="Acidic residues" evidence="3">
    <location>
        <begin position="119"/>
        <end position="128"/>
    </location>
</feature>
<feature type="compositionally biased region" description="Basic and acidic residues" evidence="3">
    <location>
        <begin position="137"/>
        <end position="178"/>
    </location>
</feature>
<feature type="compositionally biased region" description="Basic and acidic residues" evidence="3">
    <location>
        <begin position="258"/>
        <end position="268"/>
    </location>
</feature>
<feature type="compositionally biased region" description="Basic and acidic residues" evidence="3">
    <location>
        <begin position="277"/>
        <end position="292"/>
    </location>
</feature>
<feature type="compositionally biased region" description="Basic residues" evidence="3">
    <location>
        <begin position="336"/>
        <end position="348"/>
    </location>
</feature>
<feature type="compositionally biased region" description="Basic and acidic residues" evidence="3">
    <location>
        <begin position="349"/>
        <end position="365"/>
    </location>
</feature>
<proteinExistence type="inferred from homology"/>